<name>PTH_SHEON</name>
<accession>Q8EHN5</accession>
<comment type="function">
    <text evidence="1">Hydrolyzes ribosome-free peptidyl-tRNAs (with 1 or more amino acids incorporated), which drop off the ribosome during protein synthesis, or as a result of ribosome stalling.</text>
</comment>
<comment type="function">
    <text evidence="1">Catalyzes the release of premature peptidyl moieties from peptidyl-tRNA molecules trapped in stalled 50S ribosomal subunits, and thus maintains levels of free tRNAs and 50S ribosomes.</text>
</comment>
<comment type="catalytic activity">
    <reaction evidence="1">
        <text>an N-acyl-L-alpha-aminoacyl-tRNA + H2O = an N-acyl-L-amino acid + a tRNA + H(+)</text>
        <dbReference type="Rhea" id="RHEA:54448"/>
        <dbReference type="Rhea" id="RHEA-COMP:10123"/>
        <dbReference type="Rhea" id="RHEA-COMP:13883"/>
        <dbReference type="ChEBI" id="CHEBI:15377"/>
        <dbReference type="ChEBI" id="CHEBI:15378"/>
        <dbReference type="ChEBI" id="CHEBI:59874"/>
        <dbReference type="ChEBI" id="CHEBI:78442"/>
        <dbReference type="ChEBI" id="CHEBI:138191"/>
        <dbReference type="EC" id="3.1.1.29"/>
    </reaction>
</comment>
<comment type="subunit">
    <text evidence="1">Monomer.</text>
</comment>
<comment type="subcellular location">
    <subcellularLocation>
        <location evidence="1">Cytoplasm</location>
    </subcellularLocation>
</comment>
<comment type="similarity">
    <text evidence="1">Belongs to the PTH family.</text>
</comment>
<sequence length="195" mass="21197">MSEIKLIVGLANPGAEYVQTRHNAGAWYVEELARICGVSLVADSKYFGLTARAVLHGKDVRLLIPTTYMNLSGKAVGALANFFRITPEEILVAHDELDMPPGVAKFKLGGGHGGHNGLKDIIAKLANDKNFYRLRIGIGHPGDKNKVSGYVLGKAPAKEQELINAAVDEAVRSTEILFKEDMVKAMTRLHSFKAE</sequence>
<protein>
    <recommendedName>
        <fullName evidence="1">Peptidyl-tRNA hydrolase</fullName>
        <shortName evidence="1">Pth</shortName>
        <ecNumber evidence="1">3.1.1.29</ecNumber>
    </recommendedName>
</protein>
<gene>
    <name evidence="1" type="primary">pth</name>
    <name type="ordered locus">SO_1184</name>
</gene>
<proteinExistence type="inferred from homology"/>
<keyword id="KW-0963">Cytoplasm</keyword>
<keyword id="KW-0378">Hydrolase</keyword>
<keyword id="KW-1185">Reference proteome</keyword>
<keyword id="KW-0694">RNA-binding</keyword>
<keyword id="KW-0820">tRNA-binding</keyword>
<organism>
    <name type="scientific">Shewanella oneidensis (strain ATCC 700550 / JCM 31522 / CIP 106686 / LMG 19005 / NCIMB 14063 / MR-1)</name>
    <dbReference type="NCBI Taxonomy" id="211586"/>
    <lineage>
        <taxon>Bacteria</taxon>
        <taxon>Pseudomonadati</taxon>
        <taxon>Pseudomonadota</taxon>
        <taxon>Gammaproteobacteria</taxon>
        <taxon>Alteromonadales</taxon>
        <taxon>Shewanellaceae</taxon>
        <taxon>Shewanella</taxon>
    </lineage>
</organism>
<evidence type="ECO:0000255" key="1">
    <source>
        <dbReference type="HAMAP-Rule" id="MF_00083"/>
    </source>
</evidence>
<feature type="chain" id="PRO_0000187811" description="Peptidyl-tRNA hydrolase">
    <location>
        <begin position="1"/>
        <end position="195"/>
    </location>
</feature>
<feature type="active site" description="Proton acceptor" evidence="1">
    <location>
        <position position="22"/>
    </location>
</feature>
<feature type="binding site" evidence="1">
    <location>
        <position position="17"/>
    </location>
    <ligand>
        <name>tRNA</name>
        <dbReference type="ChEBI" id="CHEBI:17843"/>
    </ligand>
</feature>
<feature type="binding site" evidence="1">
    <location>
        <position position="68"/>
    </location>
    <ligand>
        <name>tRNA</name>
        <dbReference type="ChEBI" id="CHEBI:17843"/>
    </ligand>
</feature>
<feature type="binding site" evidence="1">
    <location>
        <position position="70"/>
    </location>
    <ligand>
        <name>tRNA</name>
        <dbReference type="ChEBI" id="CHEBI:17843"/>
    </ligand>
</feature>
<feature type="binding site" evidence="1">
    <location>
        <position position="116"/>
    </location>
    <ligand>
        <name>tRNA</name>
        <dbReference type="ChEBI" id="CHEBI:17843"/>
    </ligand>
</feature>
<feature type="site" description="Discriminates between blocked and unblocked aminoacyl-tRNA" evidence="1">
    <location>
        <position position="12"/>
    </location>
</feature>
<feature type="site" description="Stabilizes the basic form of H active site to accept a proton" evidence="1">
    <location>
        <position position="95"/>
    </location>
</feature>
<reference key="1">
    <citation type="journal article" date="2002" name="Nat. Biotechnol.">
        <title>Genome sequence of the dissimilatory metal ion-reducing bacterium Shewanella oneidensis.</title>
        <authorList>
            <person name="Heidelberg J.F."/>
            <person name="Paulsen I.T."/>
            <person name="Nelson K.E."/>
            <person name="Gaidos E.J."/>
            <person name="Nelson W.C."/>
            <person name="Read T.D."/>
            <person name="Eisen J.A."/>
            <person name="Seshadri R."/>
            <person name="Ward N.L."/>
            <person name="Methe B.A."/>
            <person name="Clayton R.A."/>
            <person name="Meyer T."/>
            <person name="Tsapin A."/>
            <person name="Scott J."/>
            <person name="Beanan M.J."/>
            <person name="Brinkac L.M."/>
            <person name="Daugherty S.C."/>
            <person name="DeBoy R.T."/>
            <person name="Dodson R.J."/>
            <person name="Durkin A.S."/>
            <person name="Haft D.H."/>
            <person name="Kolonay J.F."/>
            <person name="Madupu R."/>
            <person name="Peterson J.D."/>
            <person name="Umayam L.A."/>
            <person name="White O."/>
            <person name="Wolf A.M."/>
            <person name="Vamathevan J.J."/>
            <person name="Weidman J.F."/>
            <person name="Impraim M."/>
            <person name="Lee K."/>
            <person name="Berry K.J."/>
            <person name="Lee C."/>
            <person name="Mueller J."/>
            <person name="Khouri H.M."/>
            <person name="Gill J."/>
            <person name="Utterback T.R."/>
            <person name="McDonald L.A."/>
            <person name="Feldblyum T.V."/>
            <person name="Smith H.O."/>
            <person name="Venter J.C."/>
            <person name="Nealson K.H."/>
            <person name="Fraser C.M."/>
        </authorList>
    </citation>
    <scope>NUCLEOTIDE SEQUENCE [LARGE SCALE GENOMIC DNA]</scope>
    <source>
        <strain>ATCC 700550 / JCM 31522 / CIP 106686 / LMG 19005 / NCIMB 14063 / MR-1</strain>
    </source>
</reference>
<dbReference type="EC" id="3.1.1.29" evidence="1"/>
<dbReference type="EMBL" id="AE014299">
    <property type="protein sequence ID" value="AAN54254.1"/>
    <property type="molecule type" value="Genomic_DNA"/>
</dbReference>
<dbReference type="RefSeq" id="NP_716809.1">
    <property type="nucleotide sequence ID" value="NC_004347.2"/>
</dbReference>
<dbReference type="RefSeq" id="WP_011071415.1">
    <property type="nucleotide sequence ID" value="NC_004347.2"/>
</dbReference>
<dbReference type="SMR" id="Q8EHN5"/>
<dbReference type="STRING" id="211586.SO_1184"/>
<dbReference type="PaxDb" id="211586-SO_1184"/>
<dbReference type="KEGG" id="son:SO_1184"/>
<dbReference type="PATRIC" id="fig|211586.12.peg.1136"/>
<dbReference type="eggNOG" id="COG0193">
    <property type="taxonomic scope" value="Bacteria"/>
</dbReference>
<dbReference type="HOGENOM" id="CLU_062456_3_1_6"/>
<dbReference type="OrthoDB" id="9800507at2"/>
<dbReference type="PhylomeDB" id="Q8EHN5"/>
<dbReference type="BioCyc" id="SONE211586:G1GMP-1088-MONOMER"/>
<dbReference type="Proteomes" id="UP000008186">
    <property type="component" value="Chromosome"/>
</dbReference>
<dbReference type="GO" id="GO:0005737">
    <property type="term" value="C:cytoplasm"/>
    <property type="evidence" value="ECO:0007669"/>
    <property type="project" value="UniProtKB-SubCell"/>
</dbReference>
<dbReference type="GO" id="GO:0004045">
    <property type="term" value="F:peptidyl-tRNA hydrolase activity"/>
    <property type="evidence" value="ECO:0000318"/>
    <property type="project" value="GO_Central"/>
</dbReference>
<dbReference type="GO" id="GO:0000049">
    <property type="term" value="F:tRNA binding"/>
    <property type="evidence" value="ECO:0007669"/>
    <property type="project" value="UniProtKB-UniRule"/>
</dbReference>
<dbReference type="GO" id="GO:0006515">
    <property type="term" value="P:protein quality control for misfolded or incompletely synthesized proteins"/>
    <property type="evidence" value="ECO:0007669"/>
    <property type="project" value="UniProtKB-UniRule"/>
</dbReference>
<dbReference type="GO" id="GO:0072344">
    <property type="term" value="P:rescue of stalled ribosome"/>
    <property type="evidence" value="ECO:0007669"/>
    <property type="project" value="UniProtKB-UniRule"/>
</dbReference>
<dbReference type="CDD" id="cd00462">
    <property type="entry name" value="PTH"/>
    <property type="match status" value="1"/>
</dbReference>
<dbReference type="FunFam" id="3.40.50.1470:FF:000001">
    <property type="entry name" value="Peptidyl-tRNA hydrolase"/>
    <property type="match status" value="1"/>
</dbReference>
<dbReference type="Gene3D" id="3.40.50.1470">
    <property type="entry name" value="Peptidyl-tRNA hydrolase"/>
    <property type="match status" value="1"/>
</dbReference>
<dbReference type="HAMAP" id="MF_00083">
    <property type="entry name" value="Pept_tRNA_hydro_bact"/>
    <property type="match status" value="1"/>
</dbReference>
<dbReference type="InterPro" id="IPR001328">
    <property type="entry name" value="Pept_tRNA_hydro"/>
</dbReference>
<dbReference type="InterPro" id="IPR018171">
    <property type="entry name" value="Pept_tRNA_hydro_CS"/>
</dbReference>
<dbReference type="InterPro" id="IPR036416">
    <property type="entry name" value="Pept_tRNA_hydro_sf"/>
</dbReference>
<dbReference type="NCBIfam" id="TIGR00447">
    <property type="entry name" value="pth"/>
    <property type="match status" value="1"/>
</dbReference>
<dbReference type="PANTHER" id="PTHR17224">
    <property type="entry name" value="PEPTIDYL-TRNA HYDROLASE"/>
    <property type="match status" value="1"/>
</dbReference>
<dbReference type="PANTHER" id="PTHR17224:SF1">
    <property type="entry name" value="PEPTIDYL-TRNA HYDROLASE"/>
    <property type="match status" value="1"/>
</dbReference>
<dbReference type="Pfam" id="PF01195">
    <property type="entry name" value="Pept_tRNA_hydro"/>
    <property type="match status" value="1"/>
</dbReference>
<dbReference type="SUPFAM" id="SSF53178">
    <property type="entry name" value="Peptidyl-tRNA hydrolase-like"/>
    <property type="match status" value="1"/>
</dbReference>
<dbReference type="PROSITE" id="PS01195">
    <property type="entry name" value="PEPT_TRNA_HYDROL_1"/>
    <property type="match status" value="1"/>
</dbReference>
<dbReference type="PROSITE" id="PS01196">
    <property type="entry name" value="PEPT_TRNA_HYDROL_2"/>
    <property type="match status" value="1"/>
</dbReference>